<sequence>MSKKLISIVDVKDYVGQEVTIGAWVANKSGKGKIAFVQLRDGSAFFQGVAFKPNFIEKYGEESGHEKFDVIKRLNQETSVYVTGIVKEDERSKFGYELDITDLEIIGESHEYPITPKEHGTDFLMDNRHLWLRSRKQMAVMQIRNAIIYATYEFFDQNGFIKFDSPILSENAAEDSTELFETDYFGKPAFLSQSGQLYLEAGAMALGRVFDFGPVFRAEKSKTRRHLTEFWMMDAEYSFLSHEESLDLQEAYVKALIQGVLDRAPQALDILERDVEALKRYITEPFKRVSYDDAITLLQEHEADEDTDYEHLEHGDDFGSPHETWISNYFGVPTFVVNYPASFKAFYMKPVPGNPERVLCADLLAPEGYGEIIGGSMREDNYDTLVAKMDELGMDKSEYDFYLDLRKYGSVPHGGFGIGIERMVTFVAGTKHIREAIPFPRMLHRIRP</sequence>
<protein>
    <recommendedName>
        <fullName evidence="1">Asparagine--tRNA ligase</fullName>
        <ecNumber evidence="1">6.1.1.22</ecNumber>
    </recommendedName>
    <alternativeName>
        <fullName evidence="1">Asparaginyl-tRNA synthetase</fullName>
        <shortName evidence="1">AsnRS</shortName>
    </alternativeName>
</protein>
<feature type="chain" id="PRO_1000051445" description="Asparagine--tRNA ligase">
    <location>
        <begin position="1"/>
        <end position="448"/>
    </location>
</feature>
<organism>
    <name type="scientific">Streptococcus pyogenes serotype M4 (strain MGAS10750)</name>
    <dbReference type="NCBI Taxonomy" id="370554"/>
    <lineage>
        <taxon>Bacteria</taxon>
        <taxon>Bacillati</taxon>
        <taxon>Bacillota</taxon>
        <taxon>Bacilli</taxon>
        <taxon>Lactobacillales</taxon>
        <taxon>Streptococcaceae</taxon>
        <taxon>Streptococcus</taxon>
    </lineage>
</organism>
<gene>
    <name evidence="1" type="primary">asnS</name>
    <name type="ordered locus">MGAS10750_Spy0556</name>
</gene>
<name>SYN_STRPF</name>
<evidence type="ECO:0000255" key="1">
    <source>
        <dbReference type="HAMAP-Rule" id="MF_00534"/>
    </source>
</evidence>
<keyword id="KW-0030">Aminoacyl-tRNA synthetase</keyword>
<keyword id="KW-0067">ATP-binding</keyword>
<keyword id="KW-0963">Cytoplasm</keyword>
<keyword id="KW-0436">Ligase</keyword>
<keyword id="KW-0547">Nucleotide-binding</keyword>
<keyword id="KW-0648">Protein biosynthesis</keyword>
<reference key="1">
    <citation type="journal article" date="2006" name="Proc. Natl. Acad. Sci. U.S.A.">
        <title>Molecular genetic anatomy of inter- and intraserotype variation in the human bacterial pathogen group A Streptococcus.</title>
        <authorList>
            <person name="Beres S.B."/>
            <person name="Richter E.W."/>
            <person name="Nagiec M.J."/>
            <person name="Sumby P."/>
            <person name="Porcella S.F."/>
            <person name="DeLeo F.R."/>
            <person name="Musser J.M."/>
        </authorList>
    </citation>
    <scope>NUCLEOTIDE SEQUENCE [LARGE SCALE GENOMIC DNA]</scope>
    <source>
        <strain>MGAS10750</strain>
    </source>
</reference>
<comment type="catalytic activity">
    <reaction evidence="1">
        <text>tRNA(Asn) + L-asparagine + ATP = L-asparaginyl-tRNA(Asn) + AMP + diphosphate + H(+)</text>
        <dbReference type="Rhea" id="RHEA:11180"/>
        <dbReference type="Rhea" id="RHEA-COMP:9659"/>
        <dbReference type="Rhea" id="RHEA-COMP:9674"/>
        <dbReference type="ChEBI" id="CHEBI:15378"/>
        <dbReference type="ChEBI" id="CHEBI:30616"/>
        <dbReference type="ChEBI" id="CHEBI:33019"/>
        <dbReference type="ChEBI" id="CHEBI:58048"/>
        <dbReference type="ChEBI" id="CHEBI:78442"/>
        <dbReference type="ChEBI" id="CHEBI:78515"/>
        <dbReference type="ChEBI" id="CHEBI:456215"/>
        <dbReference type="EC" id="6.1.1.22"/>
    </reaction>
</comment>
<comment type="subunit">
    <text evidence="1">Homodimer.</text>
</comment>
<comment type="subcellular location">
    <subcellularLocation>
        <location evidence="1">Cytoplasm</location>
    </subcellularLocation>
</comment>
<comment type="similarity">
    <text evidence="1">Belongs to the class-II aminoacyl-tRNA synthetase family.</text>
</comment>
<dbReference type="EC" id="6.1.1.22" evidence="1"/>
<dbReference type="EMBL" id="CP000262">
    <property type="protein sequence ID" value="ABF37506.1"/>
    <property type="molecule type" value="Genomic_DNA"/>
</dbReference>
<dbReference type="SMR" id="Q1J7K5"/>
<dbReference type="KEGG" id="spi:MGAS10750_Spy0556"/>
<dbReference type="HOGENOM" id="CLU_004553_2_0_9"/>
<dbReference type="Proteomes" id="UP000002434">
    <property type="component" value="Chromosome"/>
</dbReference>
<dbReference type="GO" id="GO:0005737">
    <property type="term" value="C:cytoplasm"/>
    <property type="evidence" value="ECO:0007669"/>
    <property type="project" value="UniProtKB-SubCell"/>
</dbReference>
<dbReference type="GO" id="GO:0004816">
    <property type="term" value="F:asparagine-tRNA ligase activity"/>
    <property type="evidence" value="ECO:0007669"/>
    <property type="project" value="UniProtKB-UniRule"/>
</dbReference>
<dbReference type="GO" id="GO:0005524">
    <property type="term" value="F:ATP binding"/>
    <property type="evidence" value="ECO:0007669"/>
    <property type="project" value="UniProtKB-UniRule"/>
</dbReference>
<dbReference type="GO" id="GO:0140096">
    <property type="term" value="F:catalytic activity, acting on a protein"/>
    <property type="evidence" value="ECO:0007669"/>
    <property type="project" value="UniProtKB-ARBA"/>
</dbReference>
<dbReference type="GO" id="GO:0003676">
    <property type="term" value="F:nucleic acid binding"/>
    <property type="evidence" value="ECO:0007669"/>
    <property type="project" value="InterPro"/>
</dbReference>
<dbReference type="GO" id="GO:0016740">
    <property type="term" value="F:transferase activity"/>
    <property type="evidence" value="ECO:0007669"/>
    <property type="project" value="UniProtKB-ARBA"/>
</dbReference>
<dbReference type="GO" id="GO:0006421">
    <property type="term" value="P:asparaginyl-tRNA aminoacylation"/>
    <property type="evidence" value="ECO:0007669"/>
    <property type="project" value="UniProtKB-UniRule"/>
</dbReference>
<dbReference type="CDD" id="cd04323">
    <property type="entry name" value="AsnRS_cyto_like_N"/>
    <property type="match status" value="1"/>
</dbReference>
<dbReference type="CDD" id="cd00776">
    <property type="entry name" value="AsxRS_core"/>
    <property type="match status" value="1"/>
</dbReference>
<dbReference type="Gene3D" id="3.30.930.10">
    <property type="entry name" value="Bira Bifunctional Protein, Domain 2"/>
    <property type="match status" value="1"/>
</dbReference>
<dbReference type="Gene3D" id="2.40.50.140">
    <property type="entry name" value="Nucleic acid-binding proteins"/>
    <property type="match status" value="1"/>
</dbReference>
<dbReference type="HAMAP" id="MF_00534">
    <property type="entry name" value="Asn_tRNA_synth"/>
    <property type="match status" value="1"/>
</dbReference>
<dbReference type="InterPro" id="IPR004364">
    <property type="entry name" value="Aa-tRNA-synt_II"/>
</dbReference>
<dbReference type="InterPro" id="IPR006195">
    <property type="entry name" value="aa-tRNA-synth_II"/>
</dbReference>
<dbReference type="InterPro" id="IPR045864">
    <property type="entry name" value="aa-tRNA-synth_II/BPL/LPL"/>
</dbReference>
<dbReference type="InterPro" id="IPR004522">
    <property type="entry name" value="Asn-tRNA-ligase"/>
</dbReference>
<dbReference type="InterPro" id="IPR002312">
    <property type="entry name" value="Asp/Asn-tRNA-synth_IIb"/>
</dbReference>
<dbReference type="InterPro" id="IPR012340">
    <property type="entry name" value="NA-bd_OB-fold"/>
</dbReference>
<dbReference type="InterPro" id="IPR004365">
    <property type="entry name" value="NA-bd_OB_tRNA"/>
</dbReference>
<dbReference type="NCBIfam" id="TIGR00457">
    <property type="entry name" value="asnS"/>
    <property type="match status" value="1"/>
</dbReference>
<dbReference type="NCBIfam" id="NF003037">
    <property type="entry name" value="PRK03932.1"/>
    <property type="match status" value="1"/>
</dbReference>
<dbReference type="PANTHER" id="PTHR22594:SF34">
    <property type="entry name" value="ASPARAGINE--TRNA LIGASE, MITOCHONDRIAL-RELATED"/>
    <property type="match status" value="1"/>
</dbReference>
<dbReference type="PANTHER" id="PTHR22594">
    <property type="entry name" value="ASPARTYL/LYSYL-TRNA SYNTHETASE"/>
    <property type="match status" value="1"/>
</dbReference>
<dbReference type="Pfam" id="PF00152">
    <property type="entry name" value="tRNA-synt_2"/>
    <property type="match status" value="1"/>
</dbReference>
<dbReference type="Pfam" id="PF01336">
    <property type="entry name" value="tRNA_anti-codon"/>
    <property type="match status" value="1"/>
</dbReference>
<dbReference type="PRINTS" id="PR01042">
    <property type="entry name" value="TRNASYNTHASP"/>
</dbReference>
<dbReference type="SUPFAM" id="SSF55681">
    <property type="entry name" value="Class II aaRS and biotin synthetases"/>
    <property type="match status" value="1"/>
</dbReference>
<dbReference type="SUPFAM" id="SSF50249">
    <property type="entry name" value="Nucleic acid-binding proteins"/>
    <property type="match status" value="1"/>
</dbReference>
<dbReference type="PROSITE" id="PS50862">
    <property type="entry name" value="AA_TRNA_LIGASE_II"/>
    <property type="match status" value="1"/>
</dbReference>
<proteinExistence type="inferred from homology"/>
<accession>Q1J7K5</accession>